<accession>Q083U9</accession>
<keyword id="KW-0378">Hydrolase</keyword>
<keyword id="KW-1185">Reference proteome</keyword>
<evidence type="ECO:0000255" key="1">
    <source>
        <dbReference type="HAMAP-Rule" id="MF_01841"/>
    </source>
</evidence>
<evidence type="ECO:0000256" key="2">
    <source>
        <dbReference type="SAM" id="MobiDB-lite"/>
    </source>
</evidence>
<proteinExistence type="inferred from homology"/>
<gene>
    <name evidence="1" type="primary">aguA</name>
    <name type="ordered locus">Sfri_1615</name>
</gene>
<dbReference type="EC" id="3.5.3.12" evidence="1"/>
<dbReference type="EMBL" id="CP000447">
    <property type="protein sequence ID" value="ABI71466.1"/>
    <property type="molecule type" value="Genomic_DNA"/>
</dbReference>
<dbReference type="RefSeq" id="WP_011637082.1">
    <property type="nucleotide sequence ID" value="NC_008345.1"/>
</dbReference>
<dbReference type="SMR" id="Q083U9"/>
<dbReference type="STRING" id="318167.Sfri_1615"/>
<dbReference type="KEGG" id="sfr:Sfri_1615"/>
<dbReference type="eggNOG" id="COG2957">
    <property type="taxonomic scope" value="Bacteria"/>
</dbReference>
<dbReference type="HOGENOM" id="CLU_037682_1_0_6"/>
<dbReference type="OrthoDB" id="9808013at2"/>
<dbReference type="Proteomes" id="UP000000684">
    <property type="component" value="Chromosome"/>
</dbReference>
<dbReference type="GO" id="GO:0047632">
    <property type="term" value="F:agmatine deiminase activity"/>
    <property type="evidence" value="ECO:0007669"/>
    <property type="project" value="UniProtKB-UniRule"/>
</dbReference>
<dbReference type="GO" id="GO:0004668">
    <property type="term" value="F:protein-arginine deiminase activity"/>
    <property type="evidence" value="ECO:0007669"/>
    <property type="project" value="InterPro"/>
</dbReference>
<dbReference type="GO" id="GO:0009446">
    <property type="term" value="P:putrescine biosynthetic process"/>
    <property type="evidence" value="ECO:0007669"/>
    <property type="project" value="InterPro"/>
</dbReference>
<dbReference type="Gene3D" id="3.75.10.10">
    <property type="entry name" value="L-arginine/glycine Amidinotransferase, Chain A"/>
    <property type="match status" value="1"/>
</dbReference>
<dbReference type="HAMAP" id="MF_01841">
    <property type="entry name" value="Agmatine_deimin"/>
    <property type="match status" value="1"/>
</dbReference>
<dbReference type="InterPro" id="IPR017754">
    <property type="entry name" value="Agmatine_deiminase"/>
</dbReference>
<dbReference type="InterPro" id="IPR007466">
    <property type="entry name" value="Peptidyl-Arg-deiminase_porph"/>
</dbReference>
<dbReference type="NCBIfam" id="TIGR03380">
    <property type="entry name" value="agmatine_aguA"/>
    <property type="match status" value="1"/>
</dbReference>
<dbReference type="NCBIfam" id="NF010070">
    <property type="entry name" value="PRK13551.1"/>
    <property type="match status" value="1"/>
</dbReference>
<dbReference type="PANTHER" id="PTHR31377">
    <property type="entry name" value="AGMATINE DEIMINASE-RELATED"/>
    <property type="match status" value="1"/>
</dbReference>
<dbReference type="PANTHER" id="PTHR31377:SF0">
    <property type="entry name" value="AGMATINE DEIMINASE-RELATED"/>
    <property type="match status" value="1"/>
</dbReference>
<dbReference type="Pfam" id="PF04371">
    <property type="entry name" value="PAD_porph"/>
    <property type="match status" value="1"/>
</dbReference>
<dbReference type="SUPFAM" id="SSF55909">
    <property type="entry name" value="Pentein"/>
    <property type="match status" value="1"/>
</dbReference>
<comment type="catalytic activity">
    <reaction evidence="1">
        <text>agmatine + H2O = N-carbamoylputrescine + NH4(+)</text>
        <dbReference type="Rhea" id="RHEA:18037"/>
        <dbReference type="ChEBI" id="CHEBI:15377"/>
        <dbReference type="ChEBI" id="CHEBI:28938"/>
        <dbReference type="ChEBI" id="CHEBI:58145"/>
        <dbReference type="ChEBI" id="CHEBI:58318"/>
        <dbReference type="EC" id="3.5.3.12"/>
    </reaction>
</comment>
<comment type="similarity">
    <text evidence="1">Belongs to the agmatine deiminase family.</text>
</comment>
<feature type="chain" id="PRO_1000070569" description="Putative agmatine deiminase">
    <location>
        <begin position="1"/>
        <end position="370"/>
    </location>
</feature>
<feature type="region of interest" description="Disordered" evidence="2">
    <location>
        <begin position="1"/>
        <end position="20"/>
    </location>
</feature>
<feature type="compositionally biased region" description="Polar residues" evidence="2">
    <location>
        <begin position="1"/>
        <end position="19"/>
    </location>
</feature>
<feature type="active site" description="Amidino-cysteine intermediate" evidence="1">
    <location>
        <position position="361"/>
    </location>
</feature>
<sequence>MTNMNVDATQLTTKPSQDGFSMPAEWAQQQAVWMIWPYRPDNWRSAGAYAQATFAKVADAIGAVTPVYMGVPKAFLAQAKTVMPAHVTLVEIDSNDCWARDTGPTVVVNAKGECRGVDWGFNAWGGDNGGLYSPWDKDELVAQKMLTQHGFDRYQAPLILEGGSIHVDGEGTCMTTAECLLNSNRNPDLTREQIEALLAEYLNVKQFIWLPDGVYMDETDGHIDNLCCFARPGEVVLHWTDDQSDPQYPRSKAALDILQNTVDAQGRKLTVHLIPQPGPLYCTEEEAQGVAEGTGVPRTAGERLAGSYANFLITNNRIVFPLLDPVTDDIAAQKLQEIFPEYEIVGVPAREILLGGGNIHCITQQIPSGK</sequence>
<reference key="1">
    <citation type="submission" date="2006-08" db="EMBL/GenBank/DDBJ databases">
        <title>Complete sequence of Shewanella frigidimarina NCIMB 400.</title>
        <authorList>
            <consortium name="US DOE Joint Genome Institute"/>
            <person name="Copeland A."/>
            <person name="Lucas S."/>
            <person name="Lapidus A."/>
            <person name="Barry K."/>
            <person name="Detter J.C."/>
            <person name="Glavina del Rio T."/>
            <person name="Hammon N."/>
            <person name="Israni S."/>
            <person name="Dalin E."/>
            <person name="Tice H."/>
            <person name="Pitluck S."/>
            <person name="Fredrickson J.K."/>
            <person name="Kolker E."/>
            <person name="McCuel L.A."/>
            <person name="DiChristina T."/>
            <person name="Nealson K.H."/>
            <person name="Newman D."/>
            <person name="Tiedje J.M."/>
            <person name="Zhou J."/>
            <person name="Romine M.F."/>
            <person name="Culley D.E."/>
            <person name="Serres M."/>
            <person name="Chertkov O."/>
            <person name="Brettin T."/>
            <person name="Bruce D."/>
            <person name="Han C."/>
            <person name="Tapia R."/>
            <person name="Gilna P."/>
            <person name="Schmutz J."/>
            <person name="Larimer F."/>
            <person name="Land M."/>
            <person name="Hauser L."/>
            <person name="Kyrpides N."/>
            <person name="Mikhailova N."/>
            <person name="Richardson P."/>
        </authorList>
    </citation>
    <scope>NUCLEOTIDE SEQUENCE [LARGE SCALE GENOMIC DNA]</scope>
    <source>
        <strain>NCIMB 400</strain>
    </source>
</reference>
<organism>
    <name type="scientific">Shewanella frigidimarina (strain NCIMB 400)</name>
    <dbReference type="NCBI Taxonomy" id="318167"/>
    <lineage>
        <taxon>Bacteria</taxon>
        <taxon>Pseudomonadati</taxon>
        <taxon>Pseudomonadota</taxon>
        <taxon>Gammaproteobacteria</taxon>
        <taxon>Alteromonadales</taxon>
        <taxon>Shewanellaceae</taxon>
        <taxon>Shewanella</taxon>
    </lineage>
</organism>
<protein>
    <recommendedName>
        <fullName evidence="1">Putative agmatine deiminase</fullName>
        <ecNumber evidence="1">3.5.3.12</ecNumber>
    </recommendedName>
    <alternativeName>
        <fullName evidence="1">Agmatine iminohydrolase</fullName>
    </alternativeName>
</protein>
<name>AGUA_SHEFN</name>